<dbReference type="EMBL" id="D17764">
    <property type="protein sequence ID" value="BAA04610.1"/>
    <property type="molecule type" value="mRNA"/>
</dbReference>
<dbReference type="EMBL" id="BC087579">
    <property type="protein sequence ID" value="AAH87579.1"/>
    <property type="molecule type" value="mRNA"/>
</dbReference>
<dbReference type="RefSeq" id="NP_542955.2">
    <property type="nucleotide sequence ID" value="NM_080777.2"/>
</dbReference>
<dbReference type="RefSeq" id="XP_006253656.1">
    <property type="nucleotide sequence ID" value="XM_006253594.2"/>
</dbReference>
<dbReference type="BMRB" id="Q63754"/>
<dbReference type="BioGRID" id="250205">
    <property type="interactions" value="2"/>
</dbReference>
<dbReference type="FunCoup" id="Q63754">
    <property type="interactions" value="396"/>
</dbReference>
<dbReference type="IntAct" id="Q63754">
    <property type="interactions" value="1"/>
</dbReference>
<dbReference type="STRING" id="10116.ENSRNOP00000024357"/>
<dbReference type="GlyGen" id="Q63754">
    <property type="glycosylation" value="1 site, 1 O-linked glycan (1 site)"/>
</dbReference>
<dbReference type="iPTMnet" id="Q63754"/>
<dbReference type="PhosphoSitePlus" id="Q63754"/>
<dbReference type="SwissPalm" id="Q63754"/>
<dbReference type="jPOST" id="Q63754"/>
<dbReference type="PaxDb" id="10116-ENSRNOP00000024357"/>
<dbReference type="GeneID" id="113893"/>
<dbReference type="KEGG" id="rno:113893"/>
<dbReference type="UCSC" id="RGD:70992">
    <property type="organism name" value="rat"/>
</dbReference>
<dbReference type="AGR" id="RGD:70992"/>
<dbReference type="CTD" id="6620"/>
<dbReference type="RGD" id="70992">
    <property type="gene designation" value="Sncb"/>
</dbReference>
<dbReference type="eggNOG" id="ENOG502S0N5">
    <property type="taxonomic scope" value="Eukaryota"/>
</dbReference>
<dbReference type="InParanoid" id="Q63754"/>
<dbReference type="OrthoDB" id="85048at9989"/>
<dbReference type="PhylomeDB" id="Q63754"/>
<dbReference type="TreeFam" id="TF332776"/>
<dbReference type="PRO" id="PR:Q63754"/>
<dbReference type="Proteomes" id="UP000002494">
    <property type="component" value="Unplaced"/>
</dbReference>
<dbReference type="GO" id="GO:0043679">
    <property type="term" value="C:axon terminus"/>
    <property type="evidence" value="ECO:0000314"/>
    <property type="project" value="RGD"/>
</dbReference>
<dbReference type="GO" id="GO:0005737">
    <property type="term" value="C:cytoplasm"/>
    <property type="evidence" value="ECO:0000318"/>
    <property type="project" value="GO_Central"/>
</dbReference>
<dbReference type="GO" id="GO:0030426">
    <property type="term" value="C:growth cone"/>
    <property type="evidence" value="ECO:0000314"/>
    <property type="project" value="RGD"/>
</dbReference>
<dbReference type="GO" id="GO:0016234">
    <property type="term" value="C:inclusion body"/>
    <property type="evidence" value="ECO:0000266"/>
    <property type="project" value="RGD"/>
</dbReference>
<dbReference type="GO" id="GO:0043025">
    <property type="term" value="C:neuronal cell body"/>
    <property type="evidence" value="ECO:0000314"/>
    <property type="project" value="RGD"/>
</dbReference>
<dbReference type="GO" id="GO:0099523">
    <property type="term" value="C:presynaptic cytosol"/>
    <property type="evidence" value="ECO:0000314"/>
    <property type="project" value="SynGO"/>
</dbReference>
<dbReference type="GO" id="GO:0045202">
    <property type="term" value="C:synapse"/>
    <property type="evidence" value="ECO:0000266"/>
    <property type="project" value="RGD"/>
</dbReference>
<dbReference type="GO" id="GO:0043195">
    <property type="term" value="C:terminal bouton"/>
    <property type="evidence" value="ECO:0000314"/>
    <property type="project" value="RGD"/>
</dbReference>
<dbReference type="GO" id="GO:0043014">
    <property type="term" value="F:alpha-tubulin binding"/>
    <property type="evidence" value="ECO:0000314"/>
    <property type="project" value="RGD"/>
</dbReference>
<dbReference type="GO" id="GO:0048487">
    <property type="term" value="F:beta-tubulin binding"/>
    <property type="evidence" value="ECO:0000314"/>
    <property type="project" value="RGD"/>
</dbReference>
<dbReference type="GO" id="GO:0005509">
    <property type="term" value="F:calcium ion binding"/>
    <property type="evidence" value="ECO:0000266"/>
    <property type="project" value="RGD"/>
</dbReference>
<dbReference type="GO" id="GO:1903136">
    <property type="term" value="F:cuprous ion binding"/>
    <property type="evidence" value="ECO:0000266"/>
    <property type="project" value="RGD"/>
</dbReference>
<dbReference type="GO" id="GO:0046914">
    <property type="term" value="F:transition metal ion binding"/>
    <property type="evidence" value="ECO:0000266"/>
    <property type="project" value="RGD"/>
</dbReference>
<dbReference type="GO" id="GO:0007268">
    <property type="term" value="P:chemical synaptic transmission"/>
    <property type="evidence" value="ECO:0000266"/>
    <property type="project" value="RGD"/>
</dbReference>
<dbReference type="GO" id="GO:0042417">
    <property type="term" value="P:dopamine metabolic process"/>
    <property type="evidence" value="ECO:0000266"/>
    <property type="project" value="RGD"/>
</dbReference>
<dbReference type="GO" id="GO:0043524">
    <property type="term" value="P:negative regulation of neuron apoptotic process"/>
    <property type="evidence" value="ECO:0000266"/>
    <property type="project" value="RGD"/>
</dbReference>
<dbReference type="GO" id="GO:0051402">
    <property type="term" value="P:neuron apoptotic process"/>
    <property type="evidence" value="ECO:0000266"/>
    <property type="project" value="RGD"/>
</dbReference>
<dbReference type="GO" id="GO:0050808">
    <property type="term" value="P:synapse organization"/>
    <property type="evidence" value="ECO:0000266"/>
    <property type="project" value="RGD"/>
</dbReference>
<dbReference type="GO" id="GO:0048488">
    <property type="term" value="P:synaptic vesicle endocytosis"/>
    <property type="evidence" value="ECO:0000266"/>
    <property type="project" value="RGD"/>
</dbReference>
<dbReference type="FunFam" id="1.10.287.700:FF:000001">
    <property type="entry name" value="Alpha-synuclein"/>
    <property type="match status" value="1"/>
</dbReference>
<dbReference type="Gene3D" id="1.10.287.700">
    <property type="entry name" value="Helix hairpin bin"/>
    <property type="match status" value="1"/>
</dbReference>
<dbReference type="InterPro" id="IPR001058">
    <property type="entry name" value="Synuclein"/>
</dbReference>
<dbReference type="InterPro" id="IPR002461">
    <property type="entry name" value="Synuclein_beta"/>
</dbReference>
<dbReference type="PANTHER" id="PTHR13820:SF4">
    <property type="entry name" value="BETA-SYNUCLEIN"/>
    <property type="match status" value="1"/>
</dbReference>
<dbReference type="PANTHER" id="PTHR13820">
    <property type="entry name" value="SYNUCLEIN"/>
    <property type="match status" value="1"/>
</dbReference>
<dbReference type="Pfam" id="PF01387">
    <property type="entry name" value="Synuclein"/>
    <property type="match status" value="1"/>
</dbReference>
<dbReference type="PRINTS" id="PR01213">
    <property type="entry name" value="BSYNUCLEIN"/>
</dbReference>
<dbReference type="PRINTS" id="PR01211">
    <property type="entry name" value="SYNUCLEIN"/>
</dbReference>
<dbReference type="SUPFAM" id="SSF118375">
    <property type="entry name" value="Synuclein"/>
    <property type="match status" value="1"/>
</dbReference>
<keyword id="KW-0963">Cytoplasm</keyword>
<keyword id="KW-0903">Direct protein sequencing</keyword>
<keyword id="KW-0597">Phosphoprotein</keyword>
<keyword id="KW-1185">Reference proteome</keyword>
<keyword id="KW-0677">Repeat</keyword>
<organism>
    <name type="scientific">Rattus norvegicus</name>
    <name type="common">Rat</name>
    <dbReference type="NCBI Taxonomy" id="10116"/>
    <lineage>
        <taxon>Eukaryota</taxon>
        <taxon>Metazoa</taxon>
        <taxon>Chordata</taxon>
        <taxon>Craniata</taxon>
        <taxon>Vertebrata</taxon>
        <taxon>Euteleostomi</taxon>
        <taxon>Mammalia</taxon>
        <taxon>Eutheria</taxon>
        <taxon>Euarchontoglires</taxon>
        <taxon>Glires</taxon>
        <taxon>Rodentia</taxon>
        <taxon>Myomorpha</taxon>
        <taxon>Muroidea</taxon>
        <taxon>Muridae</taxon>
        <taxon>Murinae</taxon>
        <taxon>Rattus</taxon>
    </lineage>
</organism>
<comment type="function">
    <text>May be involved in neuronal plasticity.</text>
</comment>
<comment type="subcellular location">
    <subcellularLocation>
        <location evidence="1">Cytoplasm</location>
    </subcellularLocation>
</comment>
<comment type="tissue specificity">
    <text>Expressed specifically in brain.</text>
</comment>
<comment type="PTM">
    <text evidence="4">Phosphorylated. Phosphorylation by G-protein coupled receptor kinases (GRK) is more efficient than phosphorylation by CK1, CK2 and CaM-kinase II.</text>
</comment>
<comment type="similarity">
    <text evidence="5">Belongs to the synuclein family.</text>
</comment>
<accession>Q63754</accession>
<accession>Q5PPN9</accession>
<gene>
    <name type="primary">Sncb</name>
</gene>
<proteinExistence type="evidence at protein level"/>
<sequence length="137" mass="14504">MDVFMKGLSMAKEGVVAAAEKTKQGVTEAAEKTKEGVLYVGSKTKEGVVQGVASVAEKTKEQASHLGGAVFSGAGNIAAATGLVKKEEFPTDLKPEEVAQEAAEEPLIEPLMEPEGESYEDSPQEEYQEYEPEAKGP</sequence>
<evidence type="ECO:0000250" key="1"/>
<evidence type="ECO:0000250" key="2">
    <source>
        <dbReference type="UniProtKB" id="Q16143"/>
    </source>
</evidence>
<evidence type="ECO:0000256" key="3">
    <source>
        <dbReference type="SAM" id="MobiDB-lite"/>
    </source>
</evidence>
<evidence type="ECO:0000269" key="4">
    <source>
    </source>
</evidence>
<evidence type="ECO:0000305" key="5"/>
<reference key="1">
    <citation type="journal article" date="1992" name="J. Neurochem.">
        <title>Cloning and characterization of the cDNA encoding a novel brain-specific 14-kDa protein.</title>
        <authorList>
            <person name="Tobe T."/>
            <person name="Nakajo S."/>
            <person name="Tanaka A."/>
            <person name="Mitoya A."/>
            <person name="Omata K."/>
            <person name="Nakaya K."/>
            <person name="Tomita M."/>
            <person name="Nakamura Y."/>
        </authorList>
    </citation>
    <scope>NUCLEOTIDE SEQUENCE [MRNA]</scope>
    <scope>PARTIAL PROTEIN SEQUENCE</scope>
    <source>
        <tissue>Brain</tissue>
    </source>
</reference>
<reference key="2">
    <citation type="journal article" date="2004" name="Genome Res.">
        <title>The status, quality, and expansion of the NIH full-length cDNA project: the Mammalian Gene Collection (MGC).</title>
        <authorList>
            <consortium name="The MGC Project Team"/>
        </authorList>
    </citation>
    <scope>NUCLEOTIDE SEQUENCE [LARGE SCALE MRNA] OF 1-134</scope>
    <source>
        <tissue>Brain</tissue>
    </source>
</reference>
<reference key="3">
    <citation type="submission" date="2007-04" db="UniProtKB">
        <authorList>
            <person name="Lubec G."/>
            <person name="Afjehi-Sadat L."/>
            <person name="Chen W.-Q."/>
        </authorList>
    </citation>
    <scope>PROTEIN SEQUENCE OF 33-43 AND 46-85</scope>
    <scope>IDENTIFICATION BY MASS SPECTROMETRY</scope>
    <source>
        <strain>Sprague-Dawley</strain>
        <tissue>Hippocampus</tissue>
        <tissue>Spinal cord</tissue>
    </source>
</reference>
<reference key="4">
    <citation type="journal article" date="1993" name="Eur. J. Biochem.">
        <title>A new brain-specific 14-kDa protein is a phosphoprotein. Its complete amino acid sequence and evidence for phosphorylation.</title>
        <authorList>
            <person name="Nakajo S."/>
            <person name="Tsukada K."/>
            <person name="Omata K."/>
            <person name="Nakamura Y."/>
            <person name="Nakaya K."/>
        </authorList>
    </citation>
    <scope>PHOSPHORYLATION BY CAM-KINASE II</scope>
</reference>
<reference key="5">
    <citation type="journal article" date="2012" name="Nat. Commun.">
        <title>Quantitative maps of protein phosphorylation sites across 14 different rat organs and tissues.</title>
        <authorList>
            <person name="Lundby A."/>
            <person name="Secher A."/>
            <person name="Lage K."/>
            <person name="Nordsborg N.B."/>
            <person name="Dmytriyev A."/>
            <person name="Lundby C."/>
            <person name="Olsen J.V."/>
        </authorList>
    </citation>
    <scope>IDENTIFICATION BY MASS SPECTROMETRY [LARGE SCALE ANALYSIS]</scope>
</reference>
<name>SYUB_RAT</name>
<protein>
    <recommendedName>
        <fullName>Beta-synuclein</fullName>
    </recommendedName>
    <alternativeName>
        <fullName>Phosphoneuroprotein 14</fullName>
        <shortName>PNP 14</shortName>
    </alternativeName>
</protein>
<feature type="chain" id="PRO_0000184036" description="Beta-synuclein">
    <location>
        <begin position="1"/>
        <end position="137"/>
    </location>
</feature>
<feature type="repeat" description="1">
    <location>
        <begin position="20"/>
        <end position="30"/>
    </location>
</feature>
<feature type="repeat" description="2">
    <location>
        <begin position="31"/>
        <end position="41"/>
    </location>
</feature>
<feature type="repeat" description="3; approximate">
    <location>
        <begin position="42"/>
        <end position="56"/>
    </location>
</feature>
<feature type="repeat" description="4">
    <location>
        <begin position="57"/>
        <end position="67"/>
    </location>
</feature>
<feature type="region of interest" description="4 X 11 AA tandem repeats of [EGS]-K-T-K-[EQ]-[GQ]-V-X(4)">
    <location>
        <begin position="20"/>
        <end position="67"/>
    </location>
</feature>
<feature type="region of interest" description="Disordered" evidence="3">
    <location>
        <begin position="88"/>
        <end position="137"/>
    </location>
</feature>
<feature type="compositionally biased region" description="Basic and acidic residues" evidence="3">
    <location>
        <begin position="88"/>
        <end position="97"/>
    </location>
</feature>
<feature type="compositionally biased region" description="Acidic residues" evidence="3">
    <location>
        <begin position="98"/>
        <end position="131"/>
    </location>
</feature>
<feature type="modified residue" description="Phosphoserine; by BARK1, CK2 and GRK5" evidence="2">
    <location>
        <position position="118"/>
    </location>
</feature>